<reference key="1">
    <citation type="journal article" date="2001" name="J. Pharmacol. Exp. Ther.">
        <title>Cloning and functional characterization of two murine uridine nucleotide receptors reveal a potential target for correcting ion transport deficiency in cystic fibrosis gallbladder.</title>
        <authorList>
            <person name="Lazarowski E.R."/>
            <person name="Rochelle L.G."/>
            <person name="O'Neal W.K."/>
            <person name="Ribeiro C.M.P."/>
            <person name="Grubb B.R."/>
            <person name="Zhang V."/>
            <person name="Harden T.K."/>
            <person name="Boucher R.C."/>
        </authorList>
    </citation>
    <scope>NUCLEOTIDE SEQUENCE</scope>
    <source>
        <strain>129/SvEv</strain>
    </source>
</reference>
<reference key="2">
    <citation type="journal article" date="2004" name="Genome Res.">
        <title>The status, quality, and expansion of the NIH full-length cDNA project: the Mammalian Gene Collection (MGC).</title>
        <authorList>
            <consortium name="The MGC Project Team"/>
        </authorList>
    </citation>
    <scope>NUCLEOTIDE SEQUENCE [LARGE SCALE MRNA]</scope>
    <source>
        <strain>C57BL/6J</strain>
        <tissue>Mammary gland</tissue>
    </source>
</reference>
<accession>Q9ERK9</accession>
<evidence type="ECO:0000250" key="1"/>
<evidence type="ECO:0000255" key="2"/>
<evidence type="ECO:0000255" key="3">
    <source>
        <dbReference type="PROSITE-ProRule" id="PRU00521"/>
    </source>
</evidence>
<name>P2RY6_MOUSE</name>
<gene>
    <name type="primary">P2ry6</name>
</gene>
<feature type="chain" id="PRO_0000070029" description="P2Y purinoceptor 6">
    <location>
        <begin position="1"/>
        <end position="328"/>
    </location>
</feature>
<feature type="topological domain" description="Extracellular" evidence="2">
    <location>
        <begin position="1"/>
        <end position="27"/>
    </location>
</feature>
<feature type="transmembrane region" description="Helical; Name=1" evidence="2">
    <location>
        <begin position="28"/>
        <end position="48"/>
    </location>
</feature>
<feature type="topological domain" description="Cytoplasmic" evidence="2">
    <location>
        <begin position="49"/>
        <end position="62"/>
    </location>
</feature>
<feature type="transmembrane region" description="Helical; Name=2" evidence="2">
    <location>
        <begin position="63"/>
        <end position="83"/>
    </location>
</feature>
<feature type="topological domain" description="Extracellular" evidence="2">
    <location>
        <begin position="84"/>
        <end position="101"/>
    </location>
</feature>
<feature type="transmembrane region" description="Helical; Name=3" evidence="2">
    <location>
        <begin position="102"/>
        <end position="122"/>
    </location>
</feature>
<feature type="topological domain" description="Cytoplasmic" evidence="2">
    <location>
        <begin position="123"/>
        <end position="144"/>
    </location>
</feature>
<feature type="transmembrane region" description="Helical; Name=4" evidence="2">
    <location>
        <begin position="145"/>
        <end position="165"/>
    </location>
</feature>
<feature type="topological domain" description="Extracellular" evidence="2">
    <location>
        <begin position="166"/>
        <end position="194"/>
    </location>
</feature>
<feature type="transmembrane region" description="Helical; Name=5" evidence="2">
    <location>
        <begin position="195"/>
        <end position="215"/>
    </location>
</feature>
<feature type="topological domain" description="Cytoplasmic" evidence="2">
    <location>
        <begin position="216"/>
        <end position="236"/>
    </location>
</feature>
<feature type="transmembrane region" description="Helical; Name=6" evidence="2">
    <location>
        <begin position="237"/>
        <end position="257"/>
    </location>
</feature>
<feature type="topological domain" description="Extracellular" evidence="2">
    <location>
        <begin position="258"/>
        <end position="280"/>
    </location>
</feature>
<feature type="transmembrane region" description="Helical; Name=7" evidence="2">
    <location>
        <begin position="281"/>
        <end position="303"/>
    </location>
</feature>
<feature type="topological domain" description="Cytoplasmic" evidence="2">
    <location>
        <begin position="304"/>
        <end position="328"/>
    </location>
</feature>
<feature type="glycosylation site" description="N-linked (GlcNAc...) asparagine" evidence="2">
    <location>
        <position position="5"/>
    </location>
</feature>
<feature type="glycosylation site" description="N-linked (GlcNAc...) asparagine" evidence="2">
    <location>
        <position position="173"/>
    </location>
</feature>
<feature type="disulfide bond" evidence="3">
    <location>
        <begin position="99"/>
        <end position="177"/>
    </location>
</feature>
<proteinExistence type="evidence at transcript level"/>
<sequence length="328" mass="36721">MEQDNGTIQAPGLPPTTCVYREDFKRLLLTPVYSVVLVVGLPLNICVIAQICASRRTLTRSAVYTLNLALADLMYACSLPLLIYNYARGDHWPFGDLACRFVRFLFYANLHGSILFLTCISFQRYLGICHPLASWHKRGGRRAAWVVCGVVWLAVTAQCLPTAVFAATGIQRNRTVCYDLSPPILSTRYLPYGMALTVIGFLLPFIALLACYCRMARRLCRQDGPAGPVAQERRSKAARMAVVVAAVFAISFLPFHITKTAYLAVRSTPGVSCPVLETFAAAYKGTRPFASVNSVLDPILFYFTQQKFRRQPHDLLQRLTAKWQRQRV</sequence>
<protein>
    <recommendedName>
        <fullName>P2Y purinoceptor 6</fullName>
        <shortName>P2Y6</shortName>
    </recommendedName>
</protein>
<dbReference type="EMBL" id="AF298899">
    <property type="protein sequence ID" value="AAG24619.1"/>
    <property type="molecule type" value="Genomic_DNA"/>
</dbReference>
<dbReference type="EMBL" id="BC027331">
    <property type="protein sequence ID" value="AAH27331.1"/>
    <property type="molecule type" value="mRNA"/>
</dbReference>
<dbReference type="EMBL" id="BC064095">
    <property type="protein sequence ID" value="AAH64095.1"/>
    <property type="molecule type" value="mRNA"/>
</dbReference>
<dbReference type="CCDS" id="CCDS21507.1"/>
<dbReference type="RefSeq" id="NP_898991.1">
    <property type="nucleotide sequence ID" value="NM_183168.2"/>
</dbReference>
<dbReference type="RefSeq" id="XP_006507703.1">
    <property type="nucleotide sequence ID" value="XM_006507640.4"/>
</dbReference>
<dbReference type="RefSeq" id="XP_011240041.1">
    <property type="nucleotide sequence ID" value="XM_011241739.4"/>
</dbReference>
<dbReference type="RefSeq" id="XP_036008888.1">
    <property type="nucleotide sequence ID" value="XM_036152995.1"/>
</dbReference>
<dbReference type="SMR" id="Q9ERK9"/>
<dbReference type="BioGRID" id="231427">
    <property type="interactions" value="1"/>
</dbReference>
<dbReference type="FunCoup" id="Q9ERK9">
    <property type="interactions" value="840"/>
</dbReference>
<dbReference type="STRING" id="10090.ENSMUSP00000055697"/>
<dbReference type="BindingDB" id="Q9ERK9"/>
<dbReference type="ChEMBL" id="CHEMBL5291578"/>
<dbReference type="GlyCosmos" id="Q9ERK9">
    <property type="glycosylation" value="2 sites, No reported glycans"/>
</dbReference>
<dbReference type="GlyGen" id="Q9ERK9">
    <property type="glycosylation" value="2 sites"/>
</dbReference>
<dbReference type="PhosphoSitePlus" id="Q9ERK9"/>
<dbReference type="PaxDb" id="10090-ENSMUSP00000055697"/>
<dbReference type="ProteomicsDB" id="294357"/>
<dbReference type="Antibodypedia" id="17126">
    <property type="antibodies" value="259 antibodies from 37 providers"/>
</dbReference>
<dbReference type="DNASU" id="233571"/>
<dbReference type="Ensembl" id="ENSMUST00000060174.6">
    <property type="protein sequence ID" value="ENSMUSP00000055697.5"/>
    <property type="gene ID" value="ENSMUSG00000048779.6"/>
</dbReference>
<dbReference type="GeneID" id="233571"/>
<dbReference type="KEGG" id="mmu:233571"/>
<dbReference type="UCSC" id="uc009inw.2">
    <property type="organism name" value="mouse"/>
</dbReference>
<dbReference type="AGR" id="MGI:2673874"/>
<dbReference type="CTD" id="5031"/>
<dbReference type="MGI" id="MGI:2673874">
    <property type="gene designation" value="P2ry6"/>
</dbReference>
<dbReference type="VEuPathDB" id="HostDB:ENSMUSG00000048779"/>
<dbReference type="eggNOG" id="ENOG502QRYJ">
    <property type="taxonomic scope" value="Eukaryota"/>
</dbReference>
<dbReference type="GeneTree" id="ENSGT01030000234621"/>
<dbReference type="HOGENOM" id="CLU_009579_8_2_1"/>
<dbReference type="InParanoid" id="Q9ERK9"/>
<dbReference type="OMA" id="ICGGVWL"/>
<dbReference type="OrthoDB" id="9881476at2759"/>
<dbReference type="PhylomeDB" id="Q9ERK9"/>
<dbReference type="TreeFam" id="TF330775"/>
<dbReference type="Reactome" id="R-MMU-416476">
    <property type="pathway name" value="G alpha (q) signalling events"/>
</dbReference>
<dbReference type="Reactome" id="R-MMU-417957">
    <property type="pathway name" value="P2Y receptors"/>
</dbReference>
<dbReference type="BioGRID-ORCS" id="233571">
    <property type="hits" value="2 hits in 79 CRISPR screens"/>
</dbReference>
<dbReference type="PRO" id="PR:Q9ERK9"/>
<dbReference type="Proteomes" id="UP000000589">
    <property type="component" value="Chromosome 7"/>
</dbReference>
<dbReference type="RNAct" id="Q9ERK9">
    <property type="molecule type" value="protein"/>
</dbReference>
<dbReference type="Bgee" id="ENSMUSG00000048779">
    <property type="expression patterns" value="Expressed in stroma of bone marrow and 128 other cell types or tissues"/>
</dbReference>
<dbReference type="ExpressionAtlas" id="Q9ERK9">
    <property type="expression patterns" value="baseline and differential"/>
</dbReference>
<dbReference type="GO" id="GO:0005886">
    <property type="term" value="C:plasma membrane"/>
    <property type="evidence" value="ECO:0007669"/>
    <property type="project" value="UniProtKB-SubCell"/>
</dbReference>
<dbReference type="GO" id="GO:0001621">
    <property type="term" value="F:G protein-coupled ADP receptor activity"/>
    <property type="evidence" value="ECO:0007669"/>
    <property type="project" value="Ensembl"/>
</dbReference>
<dbReference type="GO" id="GO:0045029">
    <property type="term" value="F:G protein-coupled UDP receptor activity"/>
    <property type="evidence" value="ECO:0000314"/>
    <property type="project" value="MGI"/>
</dbReference>
<dbReference type="GO" id="GO:0045030">
    <property type="term" value="F:G protein-coupled UTP receptor activity"/>
    <property type="evidence" value="ECO:0007669"/>
    <property type="project" value="Ensembl"/>
</dbReference>
<dbReference type="GO" id="GO:0019103">
    <property type="term" value="F:pyrimidine nucleotide binding"/>
    <property type="evidence" value="ECO:0000305"/>
    <property type="project" value="MGI"/>
</dbReference>
<dbReference type="GO" id="GO:0071380">
    <property type="term" value="P:cellular response to prostaglandin E stimulus"/>
    <property type="evidence" value="ECO:0000314"/>
    <property type="project" value="MGI"/>
</dbReference>
<dbReference type="GO" id="GO:0071415">
    <property type="term" value="P:cellular response to purine-containing compound"/>
    <property type="evidence" value="ECO:0007669"/>
    <property type="project" value="Ensembl"/>
</dbReference>
<dbReference type="GO" id="GO:1905835">
    <property type="term" value="P:cellular response to pyrimidine ribonucleotide"/>
    <property type="evidence" value="ECO:0007669"/>
    <property type="project" value="Ensembl"/>
</dbReference>
<dbReference type="GO" id="GO:0070374">
    <property type="term" value="P:positive regulation of ERK1 and ERK2 cascade"/>
    <property type="evidence" value="ECO:0007669"/>
    <property type="project" value="Ensembl"/>
</dbReference>
<dbReference type="GO" id="GO:0032962">
    <property type="term" value="P:positive regulation of inositol trisphosphate biosynthetic process"/>
    <property type="evidence" value="ECO:0007669"/>
    <property type="project" value="Ensembl"/>
</dbReference>
<dbReference type="GO" id="GO:1904707">
    <property type="term" value="P:positive regulation of vascular associated smooth muscle cell proliferation"/>
    <property type="evidence" value="ECO:0007669"/>
    <property type="project" value="Ensembl"/>
</dbReference>
<dbReference type="GO" id="GO:0030321">
    <property type="term" value="P:transepithelial chloride transport"/>
    <property type="evidence" value="ECO:0000314"/>
    <property type="project" value="MGI"/>
</dbReference>
<dbReference type="FunFam" id="1.20.1070.10:FF:000209">
    <property type="entry name" value="p2Y purinoceptor 6"/>
    <property type="match status" value="1"/>
</dbReference>
<dbReference type="Gene3D" id="1.20.1070.10">
    <property type="entry name" value="Rhodopsin 7-helix transmembrane proteins"/>
    <property type="match status" value="1"/>
</dbReference>
<dbReference type="InterPro" id="IPR000276">
    <property type="entry name" value="GPCR_Rhodpsn"/>
</dbReference>
<dbReference type="InterPro" id="IPR017452">
    <property type="entry name" value="GPCR_Rhodpsn_7TM"/>
</dbReference>
<dbReference type="InterPro" id="IPR001973">
    <property type="entry name" value="P2Y6_rcpt"/>
</dbReference>
<dbReference type="PANTHER" id="PTHR24231:SF16">
    <property type="entry name" value="P2Y PURINOCEPTOR 6"/>
    <property type="match status" value="1"/>
</dbReference>
<dbReference type="PANTHER" id="PTHR24231">
    <property type="entry name" value="PURINOCEPTOR-RELATED G-PROTEIN COUPLED RECEPTOR"/>
    <property type="match status" value="1"/>
</dbReference>
<dbReference type="Pfam" id="PF00001">
    <property type="entry name" value="7tm_1"/>
    <property type="match status" value="1"/>
</dbReference>
<dbReference type="PRINTS" id="PR00237">
    <property type="entry name" value="GPCRRHODOPSN"/>
</dbReference>
<dbReference type="PRINTS" id="PR01068">
    <property type="entry name" value="P2Y6PRNOCPTR"/>
</dbReference>
<dbReference type="PRINTS" id="PR01157">
    <property type="entry name" value="P2YPURNOCPTR"/>
</dbReference>
<dbReference type="SUPFAM" id="SSF81321">
    <property type="entry name" value="Family A G protein-coupled receptor-like"/>
    <property type="match status" value="1"/>
</dbReference>
<dbReference type="PROSITE" id="PS50262">
    <property type="entry name" value="G_PROTEIN_RECEP_F1_2"/>
    <property type="match status" value="1"/>
</dbReference>
<keyword id="KW-1003">Cell membrane</keyword>
<keyword id="KW-1015">Disulfide bond</keyword>
<keyword id="KW-0297">G-protein coupled receptor</keyword>
<keyword id="KW-0325">Glycoprotein</keyword>
<keyword id="KW-0472">Membrane</keyword>
<keyword id="KW-0675">Receptor</keyword>
<keyword id="KW-1185">Reference proteome</keyword>
<keyword id="KW-0807">Transducer</keyword>
<keyword id="KW-0812">Transmembrane</keyword>
<keyword id="KW-1133">Transmembrane helix</keyword>
<comment type="function">
    <text evidence="1">Receptor for extracellular UTP &gt; ADP = 2-methylthio-ATP &gt; ADP-beta-S &gt; ATP = ATP-gamma-S. The activity of this receptor is mediated by G proteins which activate a phosphatidylinositol-calcium second messenger system. Functionally coupled to phospholipase C (By similarity).</text>
</comment>
<comment type="subcellular location">
    <subcellularLocation>
        <location>Cell membrane</location>
        <topology>Multi-pass membrane protein</topology>
    </subcellularLocation>
</comment>
<comment type="similarity">
    <text evidence="3">Belongs to the G-protein coupled receptor 1 family.</text>
</comment>
<organism>
    <name type="scientific">Mus musculus</name>
    <name type="common">Mouse</name>
    <dbReference type="NCBI Taxonomy" id="10090"/>
    <lineage>
        <taxon>Eukaryota</taxon>
        <taxon>Metazoa</taxon>
        <taxon>Chordata</taxon>
        <taxon>Craniata</taxon>
        <taxon>Vertebrata</taxon>
        <taxon>Euteleostomi</taxon>
        <taxon>Mammalia</taxon>
        <taxon>Eutheria</taxon>
        <taxon>Euarchontoglires</taxon>
        <taxon>Glires</taxon>
        <taxon>Rodentia</taxon>
        <taxon>Myomorpha</taxon>
        <taxon>Muroidea</taxon>
        <taxon>Muridae</taxon>
        <taxon>Murinae</taxon>
        <taxon>Mus</taxon>
        <taxon>Mus</taxon>
    </lineage>
</organism>